<accession>P29134</accession>
<name>CH60_ACIFR</name>
<protein>
    <recommendedName>
        <fullName evidence="1">Chaperonin GroEL</fullName>
        <ecNumber evidence="1">5.6.1.7</ecNumber>
    </recommendedName>
    <alternativeName>
        <fullName evidence="1">60 kDa chaperonin</fullName>
    </alternativeName>
    <alternativeName>
        <fullName evidence="1">Chaperonin-60</fullName>
        <shortName evidence="1">Cpn60</shortName>
    </alternativeName>
</protein>
<sequence length="23" mass="2536">PAKQVAFAEHAREKMLRGVNVLA</sequence>
<dbReference type="EC" id="5.6.1.7" evidence="1"/>
<dbReference type="GO" id="GO:0005737">
    <property type="term" value="C:cytoplasm"/>
    <property type="evidence" value="ECO:0007669"/>
    <property type="project" value="UniProtKB-SubCell"/>
</dbReference>
<dbReference type="GO" id="GO:0005524">
    <property type="term" value="F:ATP binding"/>
    <property type="evidence" value="ECO:0007669"/>
    <property type="project" value="UniProtKB-KW"/>
</dbReference>
<dbReference type="GO" id="GO:0016853">
    <property type="term" value="F:isomerase activity"/>
    <property type="evidence" value="ECO:0007669"/>
    <property type="project" value="UniProtKB-KW"/>
</dbReference>
<reference key="1">
    <citation type="journal article" date="1992" name="FEMS Microbiol. Lett.">
        <title>Identification and characterization of GroEL and DnaK homologues in Thiobacillus ferrooxidans.</title>
        <authorList>
            <person name="Varela P."/>
            <person name="Jerez C.A."/>
        </authorList>
    </citation>
    <scope>PROTEIN SEQUENCE</scope>
    <source>
        <strain>ATCC 19859 / BCRC 13033 / JCM 3863 / NCIMB 9490</strain>
    </source>
</reference>
<reference key="2">
    <citation type="journal article" date="1996" name="FEMS Microbiol. Lett.">
        <title>Phosphorylation of GroEL, DnaK and other proteins from Thiobacillus ferrooxidans grown under different conditions.</title>
        <authorList>
            <person name="Seeger M."/>
            <person name="Osorio G."/>
            <person name="Jerez C.A."/>
        </authorList>
    </citation>
    <scope>PHOSPHORYLATION</scope>
</reference>
<organism>
    <name type="scientific">Acidithiobacillus ferrooxidans</name>
    <name type="common">Thiobacillus ferrooxidans</name>
    <dbReference type="NCBI Taxonomy" id="920"/>
    <lineage>
        <taxon>Bacteria</taxon>
        <taxon>Pseudomonadati</taxon>
        <taxon>Pseudomonadota</taxon>
        <taxon>Acidithiobacillia</taxon>
        <taxon>Acidithiobacillales</taxon>
        <taxon>Acidithiobacillaceae</taxon>
        <taxon>Acidithiobacillus</taxon>
    </lineage>
</organism>
<comment type="function">
    <text evidence="1">Together with its co-chaperonin GroES, plays an essential role in assisting protein folding. The GroEL-GroES system forms a nano-cage that allows encapsulation of the non-native substrate proteins and provides a physical environment optimized to promote and accelerate protein folding.</text>
</comment>
<comment type="catalytic activity">
    <reaction evidence="1">
        <text>ATP + H2O + a folded polypeptide = ADP + phosphate + an unfolded polypeptide.</text>
        <dbReference type="EC" id="5.6.1.7"/>
    </reaction>
</comment>
<comment type="subunit">
    <text evidence="1">Forms a cylinder of 14 subunits composed of two heptameric rings stacked back-to-back. Interacts with the co-chaperonin GroES.</text>
</comment>
<comment type="subcellular location">
    <subcellularLocation>
        <location evidence="1">Cytoplasm</location>
    </subcellularLocation>
</comment>
<comment type="induction">
    <text>By heat shock.</text>
</comment>
<comment type="PTM">
    <text evidence="2">Phosphorylated on threonine.</text>
</comment>
<comment type="similarity">
    <text evidence="1 3">Belongs to the chaperonin (HSP60) family.</text>
</comment>
<keyword id="KW-0067">ATP-binding</keyword>
<keyword id="KW-0143">Chaperone</keyword>
<keyword id="KW-0963">Cytoplasm</keyword>
<keyword id="KW-0903">Direct protein sequencing</keyword>
<keyword id="KW-0413">Isomerase</keyword>
<keyword id="KW-0547">Nucleotide-binding</keyword>
<keyword id="KW-0346">Stress response</keyword>
<feature type="chain" id="PRO_0000063585" description="Chaperonin GroEL">
    <location>
        <begin position="1"/>
        <end position="23" status="greater than"/>
    </location>
</feature>
<feature type="non-terminal residue">
    <location>
        <position position="23"/>
    </location>
</feature>
<evidence type="ECO:0000255" key="1">
    <source>
        <dbReference type="HAMAP-Rule" id="MF_00600"/>
    </source>
</evidence>
<evidence type="ECO:0000269" key="2">
    <source>
    </source>
</evidence>
<evidence type="ECO:0000305" key="3"/>
<gene>
    <name evidence="1" type="primary">groEL</name>
    <name evidence="1" type="synonym">groL</name>
    <name type="synonym">mopA</name>
</gene>
<proteinExistence type="evidence at protein level"/>